<protein>
    <recommendedName>
        <fullName evidence="1">Large ribosomal subunit protein uL10</fullName>
    </recommendedName>
    <alternativeName>
        <fullName evidence="2">50S ribosomal protein L10</fullName>
    </alternativeName>
</protein>
<feature type="chain" id="PRO_1000205441" description="Large ribosomal subunit protein uL10">
    <location>
        <begin position="1"/>
        <end position="165"/>
    </location>
</feature>
<name>RL10_EDWI9</name>
<reference key="1">
    <citation type="submission" date="2009-03" db="EMBL/GenBank/DDBJ databases">
        <title>Complete genome sequence of Edwardsiella ictaluri 93-146.</title>
        <authorList>
            <person name="Williams M.L."/>
            <person name="Gillaspy A.F."/>
            <person name="Dyer D.W."/>
            <person name="Thune R.L."/>
            <person name="Waldbieser G.C."/>
            <person name="Schuster S.C."/>
            <person name="Gipson J."/>
            <person name="Zaitshik J."/>
            <person name="Landry C."/>
            <person name="Lawrence M.L."/>
        </authorList>
    </citation>
    <scope>NUCLEOTIDE SEQUENCE [LARGE SCALE GENOMIC DNA]</scope>
    <source>
        <strain>93-146</strain>
    </source>
</reference>
<evidence type="ECO:0000255" key="1">
    <source>
        <dbReference type="HAMAP-Rule" id="MF_00362"/>
    </source>
</evidence>
<evidence type="ECO:0000305" key="2"/>
<accession>C5BHE2</accession>
<sequence>MALNLQDKQAIVAEVTEVAKGALSAVVADSRGVTVDKMTELRKAGREAGVYMRVVRNTLMRRVVEGSQFECLKDTFVGPTLIAFSMEHPGAAARLFKAFAKDNAKFEVKAAAFEGELIPAAQIDRLATLPTYEEAIARLMATMKEAAAGKLVRTLAALRDQKEAA</sequence>
<organism>
    <name type="scientific">Edwardsiella ictaluri (strain 93-146)</name>
    <dbReference type="NCBI Taxonomy" id="634503"/>
    <lineage>
        <taxon>Bacteria</taxon>
        <taxon>Pseudomonadati</taxon>
        <taxon>Pseudomonadota</taxon>
        <taxon>Gammaproteobacteria</taxon>
        <taxon>Enterobacterales</taxon>
        <taxon>Hafniaceae</taxon>
        <taxon>Edwardsiella</taxon>
    </lineage>
</organism>
<proteinExistence type="inferred from homology"/>
<comment type="function">
    <text evidence="1">Forms part of the ribosomal stalk, playing a central role in the interaction of the ribosome with GTP-bound translation factors.</text>
</comment>
<comment type="subunit">
    <text evidence="1">Part of the ribosomal stalk of the 50S ribosomal subunit. The N-terminus interacts with L11 and the large rRNA to form the base of the stalk. The C-terminus forms an elongated spine to which L12 dimers bind in a sequential fashion forming a multimeric L10(L12)X complex.</text>
</comment>
<comment type="similarity">
    <text evidence="1">Belongs to the universal ribosomal protein uL10 family.</text>
</comment>
<dbReference type="EMBL" id="CP001600">
    <property type="protein sequence ID" value="ACR67420.1"/>
    <property type="molecule type" value="Genomic_DNA"/>
</dbReference>
<dbReference type="RefSeq" id="WP_005280485.1">
    <property type="nucleotide sequence ID" value="NZ_CP169062.1"/>
</dbReference>
<dbReference type="STRING" id="67780.B6E78_12020"/>
<dbReference type="GeneID" id="93122643"/>
<dbReference type="KEGG" id="eic:NT01EI_0172"/>
<dbReference type="HOGENOM" id="CLU_092227_0_2_6"/>
<dbReference type="OrthoDB" id="9808307at2"/>
<dbReference type="Proteomes" id="UP000001485">
    <property type="component" value="Chromosome"/>
</dbReference>
<dbReference type="GO" id="GO:0015934">
    <property type="term" value="C:large ribosomal subunit"/>
    <property type="evidence" value="ECO:0007669"/>
    <property type="project" value="InterPro"/>
</dbReference>
<dbReference type="GO" id="GO:0070180">
    <property type="term" value="F:large ribosomal subunit rRNA binding"/>
    <property type="evidence" value="ECO:0007669"/>
    <property type="project" value="UniProtKB-UniRule"/>
</dbReference>
<dbReference type="GO" id="GO:0003735">
    <property type="term" value="F:structural constituent of ribosome"/>
    <property type="evidence" value="ECO:0007669"/>
    <property type="project" value="InterPro"/>
</dbReference>
<dbReference type="GO" id="GO:0006412">
    <property type="term" value="P:translation"/>
    <property type="evidence" value="ECO:0007669"/>
    <property type="project" value="UniProtKB-UniRule"/>
</dbReference>
<dbReference type="CDD" id="cd05797">
    <property type="entry name" value="Ribosomal_L10"/>
    <property type="match status" value="1"/>
</dbReference>
<dbReference type="FunFam" id="3.30.70.1730:FF:000001">
    <property type="entry name" value="50S ribosomal protein L10"/>
    <property type="match status" value="1"/>
</dbReference>
<dbReference type="Gene3D" id="3.30.70.1730">
    <property type="match status" value="1"/>
</dbReference>
<dbReference type="Gene3D" id="6.10.250.2350">
    <property type="match status" value="1"/>
</dbReference>
<dbReference type="HAMAP" id="MF_00362">
    <property type="entry name" value="Ribosomal_uL10"/>
    <property type="match status" value="1"/>
</dbReference>
<dbReference type="InterPro" id="IPR001790">
    <property type="entry name" value="Ribosomal_uL10"/>
</dbReference>
<dbReference type="InterPro" id="IPR043141">
    <property type="entry name" value="Ribosomal_uL10-like_sf"/>
</dbReference>
<dbReference type="InterPro" id="IPR022973">
    <property type="entry name" value="Ribosomal_uL10_bac"/>
</dbReference>
<dbReference type="InterPro" id="IPR047865">
    <property type="entry name" value="Ribosomal_uL10_bac_type"/>
</dbReference>
<dbReference type="InterPro" id="IPR002363">
    <property type="entry name" value="Ribosomal_uL10_CS_bac"/>
</dbReference>
<dbReference type="NCBIfam" id="NF000955">
    <property type="entry name" value="PRK00099.1-1"/>
    <property type="match status" value="1"/>
</dbReference>
<dbReference type="PANTHER" id="PTHR11560">
    <property type="entry name" value="39S RIBOSOMAL PROTEIN L10, MITOCHONDRIAL"/>
    <property type="match status" value="1"/>
</dbReference>
<dbReference type="Pfam" id="PF00466">
    <property type="entry name" value="Ribosomal_L10"/>
    <property type="match status" value="1"/>
</dbReference>
<dbReference type="SUPFAM" id="SSF160369">
    <property type="entry name" value="Ribosomal protein L10-like"/>
    <property type="match status" value="1"/>
</dbReference>
<dbReference type="PROSITE" id="PS01109">
    <property type="entry name" value="RIBOSOMAL_L10"/>
    <property type="match status" value="1"/>
</dbReference>
<gene>
    <name evidence="1" type="primary">rplJ</name>
    <name type="ordered locus">NT01EI_0172</name>
</gene>
<keyword id="KW-0687">Ribonucleoprotein</keyword>
<keyword id="KW-0689">Ribosomal protein</keyword>
<keyword id="KW-0694">RNA-binding</keyword>
<keyword id="KW-0699">rRNA-binding</keyword>